<keyword id="KW-0488">Methylation</keyword>
<keyword id="KW-0687">Ribonucleoprotein</keyword>
<keyword id="KW-0689">Ribosomal protein</keyword>
<keyword id="KW-0694">RNA-binding</keyword>
<keyword id="KW-0699">rRNA-binding</keyword>
<evidence type="ECO:0000255" key="1">
    <source>
        <dbReference type="HAMAP-Rule" id="MF_01325"/>
    </source>
</evidence>
<evidence type="ECO:0000256" key="2">
    <source>
        <dbReference type="SAM" id="MobiDB-lite"/>
    </source>
</evidence>
<evidence type="ECO:0000305" key="3"/>
<name>RL3_BURP1</name>
<protein>
    <recommendedName>
        <fullName evidence="1">Large ribosomal subunit protein uL3</fullName>
    </recommendedName>
    <alternativeName>
        <fullName evidence="3">50S ribosomal protein L3</fullName>
    </alternativeName>
</protein>
<accession>Q3JMR3</accession>
<reference key="1">
    <citation type="journal article" date="2010" name="Genome Biol. Evol.">
        <title>Continuing evolution of Burkholderia mallei through genome reduction and large-scale rearrangements.</title>
        <authorList>
            <person name="Losada L."/>
            <person name="Ronning C.M."/>
            <person name="DeShazer D."/>
            <person name="Woods D."/>
            <person name="Fedorova N."/>
            <person name="Kim H.S."/>
            <person name="Shabalina S.A."/>
            <person name="Pearson T.R."/>
            <person name="Brinkac L."/>
            <person name="Tan P."/>
            <person name="Nandi T."/>
            <person name="Crabtree J."/>
            <person name="Badger J."/>
            <person name="Beckstrom-Sternberg S."/>
            <person name="Saqib M."/>
            <person name="Schutzer S.E."/>
            <person name="Keim P."/>
            <person name="Nierman W.C."/>
        </authorList>
    </citation>
    <scope>NUCLEOTIDE SEQUENCE [LARGE SCALE GENOMIC DNA]</scope>
    <source>
        <strain>1710b</strain>
    </source>
</reference>
<proteinExistence type="inferred from homology"/>
<dbReference type="EMBL" id="CP000124">
    <property type="protein sequence ID" value="ABA47840.1"/>
    <property type="molecule type" value="Genomic_DNA"/>
</dbReference>
<dbReference type="RefSeq" id="WP_004521904.1">
    <property type="nucleotide sequence ID" value="NC_007434.1"/>
</dbReference>
<dbReference type="SMR" id="Q3JMR3"/>
<dbReference type="EnsemblBacteria" id="ABA47840">
    <property type="protein sequence ID" value="ABA47840"/>
    <property type="gene ID" value="BURPS1710b_3776"/>
</dbReference>
<dbReference type="GeneID" id="93061832"/>
<dbReference type="KEGG" id="bpm:BURPS1710b_3776"/>
<dbReference type="HOGENOM" id="CLU_044142_4_1_4"/>
<dbReference type="Proteomes" id="UP000002700">
    <property type="component" value="Chromosome I"/>
</dbReference>
<dbReference type="GO" id="GO:0022625">
    <property type="term" value="C:cytosolic large ribosomal subunit"/>
    <property type="evidence" value="ECO:0007669"/>
    <property type="project" value="TreeGrafter"/>
</dbReference>
<dbReference type="GO" id="GO:0019843">
    <property type="term" value="F:rRNA binding"/>
    <property type="evidence" value="ECO:0007669"/>
    <property type="project" value="UniProtKB-UniRule"/>
</dbReference>
<dbReference type="GO" id="GO:0003735">
    <property type="term" value="F:structural constituent of ribosome"/>
    <property type="evidence" value="ECO:0007669"/>
    <property type="project" value="InterPro"/>
</dbReference>
<dbReference type="GO" id="GO:0006412">
    <property type="term" value="P:translation"/>
    <property type="evidence" value="ECO:0007669"/>
    <property type="project" value="UniProtKB-UniRule"/>
</dbReference>
<dbReference type="FunFam" id="2.40.30.10:FF:000004">
    <property type="entry name" value="50S ribosomal protein L3"/>
    <property type="match status" value="1"/>
</dbReference>
<dbReference type="FunFam" id="3.30.160.810:FF:000001">
    <property type="entry name" value="50S ribosomal protein L3"/>
    <property type="match status" value="1"/>
</dbReference>
<dbReference type="Gene3D" id="3.30.160.810">
    <property type="match status" value="1"/>
</dbReference>
<dbReference type="Gene3D" id="2.40.30.10">
    <property type="entry name" value="Translation factors"/>
    <property type="match status" value="1"/>
</dbReference>
<dbReference type="HAMAP" id="MF_01325_B">
    <property type="entry name" value="Ribosomal_uL3_B"/>
    <property type="match status" value="1"/>
</dbReference>
<dbReference type="InterPro" id="IPR000597">
    <property type="entry name" value="Ribosomal_uL3"/>
</dbReference>
<dbReference type="InterPro" id="IPR019927">
    <property type="entry name" value="Ribosomal_uL3_bac/org-type"/>
</dbReference>
<dbReference type="InterPro" id="IPR019926">
    <property type="entry name" value="Ribosomal_uL3_CS"/>
</dbReference>
<dbReference type="InterPro" id="IPR009000">
    <property type="entry name" value="Transl_B-barrel_sf"/>
</dbReference>
<dbReference type="NCBIfam" id="TIGR03625">
    <property type="entry name" value="L3_bact"/>
    <property type="match status" value="1"/>
</dbReference>
<dbReference type="PANTHER" id="PTHR11229">
    <property type="entry name" value="50S RIBOSOMAL PROTEIN L3"/>
    <property type="match status" value="1"/>
</dbReference>
<dbReference type="PANTHER" id="PTHR11229:SF16">
    <property type="entry name" value="LARGE RIBOSOMAL SUBUNIT PROTEIN UL3C"/>
    <property type="match status" value="1"/>
</dbReference>
<dbReference type="Pfam" id="PF00297">
    <property type="entry name" value="Ribosomal_L3"/>
    <property type="match status" value="1"/>
</dbReference>
<dbReference type="SUPFAM" id="SSF50447">
    <property type="entry name" value="Translation proteins"/>
    <property type="match status" value="1"/>
</dbReference>
<dbReference type="PROSITE" id="PS00474">
    <property type="entry name" value="RIBOSOMAL_L3"/>
    <property type="match status" value="1"/>
</dbReference>
<gene>
    <name evidence="1" type="primary">rplC</name>
    <name type="ordered locus">BURPS1710b_3776</name>
</gene>
<sequence>MSLGLVGRKVGMTRIFTAEGDSIPVTVLDVSDNRVTQIKTVETDGYTAVQVAFGSRRASRVTKPLAGHLAKAGVEAGEILKEFRIEADKAAELSNGAVIGPDLFEVGQKVDVQGVSIGKGYAGTIKRYNFGSGRASHGNSRSHNVPGSIGMAQDPGRVFPGKRMTGHMGDETVTVQNLEIARIDADRKLLLVKGAVPGAKGGKVFVTPAVKTRAVKGAK</sequence>
<comment type="function">
    <text evidence="1">One of the primary rRNA binding proteins, it binds directly near the 3'-end of the 23S rRNA, where it nucleates assembly of the 50S subunit.</text>
</comment>
<comment type="subunit">
    <text evidence="1">Part of the 50S ribosomal subunit. Forms a cluster with proteins L14 and L19.</text>
</comment>
<comment type="PTM">
    <text evidence="1">Methylated by PrmB.</text>
</comment>
<comment type="similarity">
    <text evidence="1">Belongs to the universal ribosomal protein uL3 family.</text>
</comment>
<organism>
    <name type="scientific">Burkholderia pseudomallei (strain 1710b)</name>
    <dbReference type="NCBI Taxonomy" id="320372"/>
    <lineage>
        <taxon>Bacteria</taxon>
        <taxon>Pseudomonadati</taxon>
        <taxon>Pseudomonadota</taxon>
        <taxon>Betaproteobacteria</taxon>
        <taxon>Burkholderiales</taxon>
        <taxon>Burkholderiaceae</taxon>
        <taxon>Burkholderia</taxon>
        <taxon>pseudomallei group</taxon>
    </lineage>
</organism>
<feature type="chain" id="PRO_0000241327" description="Large ribosomal subunit protein uL3">
    <location>
        <begin position="1"/>
        <end position="219"/>
    </location>
</feature>
<feature type="region of interest" description="Disordered" evidence="2">
    <location>
        <begin position="133"/>
        <end position="153"/>
    </location>
</feature>
<feature type="modified residue" description="N5-methylglutamine" evidence="1">
    <location>
        <position position="153"/>
    </location>
</feature>